<reference key="1">
    <citation type="journal article" date="2009" name="PLoS Genet.">
        <title>Organised genome dynamics in the Escherichia coli species results in highly diverse adaptive paths.</title>
        <authorList>
            <person name="Touchon M."/>
            <person name="Hoede C."/>
            <person name="Tenaillon O."/>
            <person name="Barbe V."/>
            <person name="Baeriswyl S."/>
            <person name="Bidet P."/>
            <person name="Bingen E."/>
            <person name="Bonacorsi S."/>
            <person name="Bouchier C."/>
            <person name="Bouvet O."/>
            <person name="Calteau A."/>
            <person name="Chiapello H."/>
            <person name="Clermont O."/>
            <person name="Cruveiller S."/>
            <person name="Danchin A."/>
            <person name="Diard M."/>
            <person name="Dossat C."/>
            <person name="Karoui M.E."/>
            <person name="Frapy E."/>
            <person name="Garry L."/>
            <person name="Ghigo J.M."/>
            <person name="Gilles A.M."/>
            <person name="Johnson J."/>
            <person name="Le Bouguenec C."/>
            <person name="Lescat M."/>
            <person name="Mangenot S."/>
            <person name="Martinez-Jehanne V."/>
            <person name="Matic I."/>
            <person name="Nassif X."/>
            <person name="Oztas S."/>
            <person name="Petit M.A."/>
            <person name="Pichon C."/>
            <person name="Rouy Z."/>
            <person name="Ruf C.S."/>
            <person name="Schneider D."/>
            <person name="Tourret J."/>
            <person name="Vacherie B."/>
            <person name="Vallenet D."/>
            <person name="Medigue C."/>
            <person name="Rocha E.P.C."/>
            <person name="Denamur E."/>
        </authorList>
    </citation>
    <scope>NUCLEOTIDE SEQUENCE [LARGE SCALE GENOMIC DNA]</scope>
    <source>
        <strain>55989 / EAEC</strain>
    </source>
</reference>
<gene>
    <name evidence="1" type="primary">msrP</name>
    <name type="ordered locus">EC55989_2197</name>
</gene>
<organism>
    <name type="scientific">Escherichia coli (strain 55989 / EAEC)</name>
    <dbReference type="NCBI Taxonomy" id="585055"/>
    <lineage>
        <taxon>Bacteria</taxon>
        <taxon>Pseudomonadati</taxon>
        <taxon>Pseudomonadota</taxon>
        <taxon>Gammaproteobacteria</taxon>
        <taxon>Enterobacterales</taxon>
        <taxon>Enterobacteriaceae</taxon>
        <taxon>Escherichia</taxon>
    </lineage>
</organism>
<feature type="signal peptide" description="Tat-type signal" evidence="1">
    <location>
        <begin position="1"/>
        <end position="44"/>
    </location>
</feature>
<feature type="chain" id="PRO_1000164657" description="Protein-methionine-sulfoxide reductase catalytic subunit MsrP" evidence="1">
    <location>
        <begin position="45"/>
        <end position="334"/>
    </location>
</feature>
<feature type="binding site" evidence="1">
    <location>
        <position position="88"/>
    </location>
    <ligand>
        <name>Mo-molybdopterin</name>
        <dbReference type="ChEBI" id="CHEBI:71302"/>
    </ligand>
</feature>
<feature type="binding site" evidence="1">
    <location>
        <begin position="91"/>
        <end position="92"/>
    </location>
    <ligand>
        <name>Mo-molybdopterin</name>
        <dbReference type="ChEBI" id="CHEBI:71302"/>
    </ligand>
</feature>
<feature type="binding site" evidence="1">
    <location>
        <position position="146"/>
    </location>
    <ligand>
        <name>Mo-molybdopterin</name>
        <dbReference type="ChEBI" id="CHEBI:71302"/>
    </ligand>
    <ligandPart>
        <name>Mo</name>
        <dbReference type="ChEBI" id="CHEBI:28685"/>
    </ligandPart>
</feature>
<feature type="binding site" evidence="1">
    <location>
        <position position="181"/>
    </location>
    <ligand>
        <name>Mo-molybdopterin</name>
        <dbReference type="ChEBI" id="CHEBI:71302"/>
    </ligand>
</feature>
<feature type="binding site" evidence="1">
    <location>
        <position position="233"/>
    </location>
    <ligand>
        <name>Mo-molybdopterin</name>
        <dbReference type="ChEBI" id="CHEBI:71302"/>
    </ligand>
</feature>
<feature type="binding site" evidence="1">
    <location>
        <position position="238"/>
    </location>
    <ligand>
        <name>Mo-molybdopterin</name>
        <dbReference type="ChEBI" id="CHEBI:71302"/>
    </ligand>
</feature>
<feature type="binding site" evidence="1">
    <location>
        <begin position="249"/>
        <end position="251"/>
    </location>
    <ligand>
        <name>Mo-molybdopterin</name>
        <dbReference type="ChEBI" id="CHEBI:71302"/>
    </ligand>
</feature>
<protein>
    <recommendedName>
        <fullName evidence="1">Protein-methionine-sulfoxide reductase catalytic subunit MsrP</fullName>
        <ecNumber evidence="1">1.8.5.-</ecNumber>
    </recommendedName>
</protein>
<sequence>MKKNQFLKESDVTAESVFFMTRRQVLKALGISAAALSLPHAAHADLLSWFKGNDRPPAPAGKPLEFSKPAAWQNDLPLTPADKVSGYNNFYEFGLDKADPAANAGSLKTDPWTLKISGEVAKPLTLDHDDLTRRFPLEERIYRMRCVEAWSMVVPWIGFPLHKLLALAEPTSNAKYVAFETIYAPEQMPGQQDRFIGGGLKYPYVEGLRLDEAMHPLTLMTVGVYGKALPPQNGAPVRLIVPWKYGFKGIKSIVSIKLTRERPPTTWNLAAPDEYGFYANVNPHVDHPRWSQATERFIGSGGILDVQRQPTLLFNGYAEQVASLYRGLDLRENF</sequence>
<comment type="function">
    <text evidence="1">Part of the MsrPQ system that repairs oxidized periplasmic proteins containing methionine sulfoxide residues (Met-O), using respiratory chain electrons. Thus protects these proteins from oxidative-stress damage caused by reactive species of oxygen and chlorine generated by the host defense mechanisms. MsrPQ is essential for the maintenance of envelope integrity under bleach stress, rescuing a wide series of structurally unrelated periplasmic proteins from methionine oxidation, including the primary periplasmic chaperone SurA and the lipoprotein Pal. The catalytic subunit MsrP is non-stereospecific, being able to reduce both (R-) and (S-) diastereoisomers of methionine sulfoxide.</text>
</comment>
<comment type="catalytic activity">
    <reaction evidence="1">
        <text>L-methionyl-[protein] + a quinone + H2O = L-methionyl-(S)-S-oxide-[protein] + a quinol</text>
        <dbReference type="Rhea" id="RHEA:51292"/>
        <dbReference type="Rhea" id="RHEA-COMP:12313"/>
        <dbReference type="Rhea" id="RHEA-COMP:12315"/>
        <dbReference type="ChEBI" id="CHEBI:15377"/>
        <dbReference type="ChEBI" id="CHEBI:16044"/>
        <dbReference type="ChEBI" id="CHEBI:24646"/>
        <dbReference type="ChEBI" id="CHEBI:44120"/>
        <dbReference type="ChEBI" id="CHEBI:132124"/>
    </reaction>
</comment>
<comment type="catalytic activity">
    <reaction evidence="1">
        <text>L-methionyl-[protein] + a quinone + H2O = L-methionyl-(R)-S-oxide-[protein] + a quinol</text>
        <dbReference type="Rhea" id="RHEA:51296"/>
        <dbReference type="Rhea" id="RHEA-COMP:12313"/>
        <dbReference type="Rhea" id="RHEA-COMP:12314"/>
        <dbReference type="ChEBI" id="CHEBI:15377"/>
        <dbReference type="ChEBI" id="CHEBI:16044"/>
        <dbReference type="ChEBI" id="CHEBI:24646"/>
        <dbReference type="ChEBI" id="CHEBI:45764"/>
        <dbReference type="ChEBI" id="CHEBI:132124"/>
    </reaction>
</comment>
<comment type="cofactor">
    <cofactor evidence="1">
        <name>Mo-molybdopterin</name>
        <dbReference type="ChEBI" id="CHEBI:71302"/>
    </cofactor>
    <text evidence="1">Binds 1 Mo-molybdopterin (Mo-MPT) cofactor per subunit.</text>
</comment>
<comment type="subunit">
    <text evidence="1">Heterodimer of a catalytic subunit (MsrP) and a heme-binding subunit (MsrQ).</text>
</comment>
<comment type="subcellular location">
    <subcellularLocation>
        <location evidence="1">Periplasm</location>
    </subcellularLocation>
    <text evidence="1">Is attached to the inner membrane when interacting with the MsrQ subunit.</text>
</comment>
<comment type="PTM">
    <text evidence="1">Predicted to be exported by the Tat system. The position of the signal peptide cleavage has not been experimentally proven.</text>
</comment>
<comment type="similarity">
    <text evidence="1">Belongs to the MsrP family.</text>
</comment>
<proteinExistence type="inferred from homology"/>
<accession>B7L8Y8</accession>
<dbReference type="EC" id="1.8.5.-" evidence="1"/>
<dbReference type="EMBL" id="CU928145">
    <property type="protein sequence ID" value="CAU98070.1"/>
    <property type="molecule type" value="Genomic_DNA"/>
</dbReference>
<dbReference type="RefSeq" id="WP_000740111.1">
    <property type="nucleotide sequence ID" value="NC_011748.1"/>
</dbReference>
<dbReference type="SMR" id="B7L8Y8"/>
<dbReference type="KEGG" id="eck:EC55989_2197"/>
<dbReference type="HOGENOM" id="CLU_045520_0_0_6"/>
<dbReference type="Proteomes" id="UP000000746">
    <property type="component" value="Chromosome"/>
</dbReference>
<dbReference type="GO" id="GO:0042597">
    <property type="term" value="C:periplasmic space"/>
    <property type="evidence" value="ECO:0007669"/>
    <property type="project" value="UniProtKB-SubCell"/>
</dbReference>
<dbReference type="GO" id="GO:0046872">
    <property type="term" value="F:metal ion binding"/>
    <property type="evidence" value="ECO:0007669"/>
    <property type="project" value="UniProtKB-KW"/>
</dbReference>
<dbReference type="GO" id="GO:0043546">
    <property type="term" value="F:molybdopterin cofactor binding"/>
    <property type="evidence" value="ECO:0007669"/>
    <property type="project" value="UniProtKB-UniRule"/>
</dbReference>
<dbReference type="GO" id="GO:0016672">
    <property type="term" value="F:oxidoreductase activity, acting on a sulfur group of donors, quinone or similar compound as acceptor"/>
    <property type="evidence" value="ECO:0007669"/>
    <property type="project" value="UniProtKB-UniRule"/>
</dbReference>
<dbReference type="GO" id="GO:0030091">
    <property type="term" value="P:protein repair"/>
    <property type="evidence" value="ECO:0007669"/>
    <property type="project" value="UniProtKB-UniRule"/>
</dbReference>
<dbReference type="CDD" id="cd02107">
    <property type="entry name" value="YedY_like_Moco"/>
    <property type="match status" value="1"/>
</dbReference>
<dbReference type="FunFam" id="3.90.420.10:FF:000001">
    <property type="entry name" value="Protein-methionine-sulfoxide reductase catalytic subunit MsrP"/>
    <property type="match status" value="1"/>
</dbReference>
<dbReference type="Gene3D" id="3.90.420.10">
    <property type="entry name" value="Oxidoreductase, molybdopterin-binding domain"/>
    <property type="match status" value="1"/>
</dbReference>
<dbReference type="HAMAP" id="MF_01206">
    <property type="entry name" value="MsrP"/>
    <property type="match status" value="1"/>
</dbReference>
<dbReference type="InterPro" id="IPR022867">
    <property type="entry name" value="MsrP"/>
</dbReference>
<dbReference type="InterPro" id="IPR000572">
    <property type="entry name" value="OxRdtase_Mopterin-bd_dom"/>
</dbReference>
<dbReference type="InterPro" id="IPR036374">
    <property type="entry name" value="OxRdtase_Mopterin-bd_sf"/>
</dbReference>
<dbReference type="InterPro" id="IPR006311">
    <property type="entry name" value="TAT_signal"/>
</dbReference>
<dbReference type="NCBIfam" id="NF003767">
    <property type="entry name" value="PRK05363.1"/>
    <property type="match status" value="1"/>
</dbReference>
<dbReference type="PANTHER" id="PTHR43032">
    <property type="entry name" value="PROTEIN-METHIONINE-SULFOXIDE REDUCTASE"/>
    <property type="match status" value="1"/>
</dbReference>
<dbReference type="PANTHER" id="PTHR43032:SF3">
    <property type="entry name" value="PROTEIN-METHIONINE-SULFOXIDE REDUCTASE CATALYTIC SUBUNIT MSRP"/>
    <property type="match status" value="1"/>
</dbReference>
<dbReference type="Pfam" id="PF00174">
    <property type="entry name" value="Oxidored_molyb"/>
    <property type="match status" value="1"/>
</dbReference>
<dbReference type="SUPFAM" id="SSF56524">
    <property type="entry name" value="Oxidoreductase molybdopterin-binding domain"/>
    <property type="match status" value="1"/>
</dbReference>
<dbReference type="PROSITE" id="PS51318">
    <property type="entry name" value="TAT"/>
    <property type="match status" value="1"/>
</dbReference>
<name>MSRP_ECO55</name>
<keyword id="KW-0479">Metal-binding</keyword>
<keyword id="KW-0500">Molybdenum</keyword>
<keyword id="KW-0560">Oxidoreductase</keyword>
<keyword id="KW-0574">Periplasm</keyword>
<keyword id="KW-1185">Reference proteome</keyword>
<keyword id="KW-0732">Signal</keyword>
<evidence type="ECO:0000255" key="1">
    <source>
        <dbReference type="HAMAP-Rule" id="MF_01206"/>
    </source>
</evidence>